<keyword id="KW-0175">Coiled coil</keyword>
<keyword id="KW-0539">Nucleus</keyword>
<keyword id="KW-1185">Reference proteome</keyword>
<accession>Q5XGZ8</accession>
<dbReference type="EMBL" id="BC084278">
    <property type="protein sequence ID" value="AAH84278.1"/>
    <property type="molecule type" value="mRNA"/>
</dbReference>
<dbReference type="RefSeq" id="NP_001088273.1">
    <property type="nucleotide sequence ID" value="NM_001094804.1"/>
</dbReference>
<dbReference type="SMR" id="Q5XGZ8"/>
<dbReference type="BioGRID" id="105185">
    <property type="interactions" value="1"/>
</dbReference>
<dbReference type="IntAct" id="Q5XGZ8">
    <property type="interactions" value="1"/>
</dbReference>
<dbReference type="GeneID" id="495105"/>
<dbReference type="KEGG" id="xla:495105"/>
<dbReference type="AGR" id="Xenbase:XB-GENE-5957788"/>
<dbReference type="CTD" id="495105"/>
<dbReference type="Xenbase" id="XB-GENE-5957788">
    <property type="gene designation" value="noc3l.S"/>
</dbReference>
<dbReference type="OrthoDB" id="10263597at2759"/>
<dbReference type="Proteomes" id="UP000186698">
    <property type="component" value="Chromosome 7S"/>
</dbReference>
<dbReference type="Bgee" id="495105">
    <property type="expression patterns" value="Expressed in gastrula and 19 other cell types or tissues"/>
</dbReference>
<dbReference type="GO" id="GO:0005730">
    <property type="term" value="C:nucleolus"/>
    <property type="evidence" value="ECO:0000318"/>
    <property type="project" value="GO_Central"/>
</dbReference>
<dbReference type="GO" id="GO:0003682">
    <property type="term" value="F:chromatin binding"/>
    <property type="evidence" value="ECO:0000318"/>
    <property type="project" value="GO_Central"/>
</dbReference>
<dbReference type="GO" id="GO:0006270">
    <property type="term" value="P:DNA replication initiation"/>
    <property type="evidence" value="ECO:0000318"/>
    <property type="project" value="GO_Central"/>
</dbReference>
<dbReference type="InterPro" id="IPR016024">
    <property type="entry name" value="ARM-type_fold"/>
</dbReference>
<dbReference type="InterPro" id="IPR005612">
    <property type="entry name" value="CCAAT-binding_factor"/>
</dbReference>
<dbReference type="InterPro" id="IPR011501">
    <property type="entry name" value="Noc3_N"/>
</dbReference>
<dbReference type="InterPro" id="IPR016903">
    <property type="entry name" value="Nucleolar_cplx-assoc_3"/>
</dbReference>
<dbReference type="PANTHER" id="PTHR14428">
    <property type="entry name" value="NUCLEOLAR COMPLEX PROTEIN 3"/>
    <property type="match status" value="1"/>
</dbReference>
<dbReference type="PANTHER" id="PTHR14428:SF5">
    <property type="entry name" value="NUCLEOLAR COMPLEX PROTEIN 3 HOMOLOG"/>
    <property type="match status" value="1"/>
</dbReference>
<dbReference type="Pfam" id="PF03914">
    <property type="entry name" value="CBF"/>
    <property type="match status" value="1"/>
</dbReference>
<dbReference type="Pfam" id="PF07540">
    <property type="entry name" value="NOC3p"/>
    <property type="match status" value="1"/>
</dbReference>
<dbReference type="PIRSF" id="PIRSF028977">
    <property type="entry name" value="Nucleolar_complex_p3"/>
    <property type="match status" value="1"/>
</dbReference>
<dbReference type="SUPFAM" id="SSF48371">
    <property type="entry name" value="ARM repeat"/>
    <property type="match status" value="1"/>
</dbReference>
<reference key="1">
    <citation type="submission" date="2004-10" db="EMBL/GenBank/DDBJ databases">
        <authorList>
            <consortium name="NIH - Xenopus Gene Collection (XGC) project"/>
        </authorList>
    </citation>
    <scope>NUCLEOTIDE SEQUENCE [LARGE SCALE MRNA]</scope>
    <source>
        <tissue>Embryo</tissue>
    </source>
</reference>
<sequence>MKPMRNRKQAPSFRKLLKTSKLKLDNKLKNKQFKQESSAKKRRKEQKQLREAVRDVRSKIPKPLETVKKKQPVEEEYEVEEESLPLDMMDEDDVQLMKEMAQRASFLTRDLTYSEPVHANKRKRDDVINKYEKMPRKSKSEPEKEVIHLLPIKDRHGIIPQTMEKPVIPSEEQEENEEEMDTEHTEEVPEEPLRIMTTEELLVHRQVTLEQRKTHIATLASAILSEPENNIRKLKELRSMLMEQDPSVAVTVRKLVMLSLMEVFKDITPSYKIRPLTEAEKAARVKKDTQKLREFEEGLISQYKFYLENLEQILKDWKQMKTKKSEVVSLHAYKGLAEIAVKCLCELMVSLSHFNFHNNIIVLVVPLVNDKCRQISELSMEATRKLFRQDKFGHASLAAVKVISGLVKSRNYDVRPEVLQLLLHLRIKEVEVKKDTEDIAPKQKIMSYKDKKKNLSRMQRKWKKAEEKLERELLEAEASESKEKKLKLNTETLNIVFLTYFRILKRAQKSVLLPSVLEGLAKFAHLINVEFFDDLLIVLHKLIDSGDLTYRESLHCVQTAFNILSGQGDVLNIDPLKFYTHLYKTLYGLHAGATNDDTLIALQCLDVMLTRRRRQVSQQRALAFIKRLSTLALHVLPDSSIGILSTNRVLMQTFPKTDLLLDSDSQGSGIYLPELDEPEYCNAQNSALWELHTLMRHYHPVVQIFAAHLSAGAPSEGSGALKAELSRRSAQELFADYSIKEMTFNPPVSESVPKRKTKSRAFDLSEDLEQLIQAQLEKVSSLHVDFSSCIKAQSV</sequence>
<name>NOC3L_XENLA</name>
<comment type="subcellular location">
    <subcellularLocation>
        <location evidence="1">Nucleus</location>
        <location evidence="1">Nucleolus</location>
    </subcellularLocation>
</comment>
<comment type="similarity">
    <text evidence="4">Belongs to the CBF/MAK21 family.</text>
</comment>
<evidence type="ECO:0000250" key="1"/>
<evidence type="ECO:0000255" key="2"/>
<evidence type="ECO:0000256" key="3">
    <source>
        <dbReference type="SAM" id="MobiDB-lite"/>
    </source>
</evidence>
<evidence type="ECO:0000305" key="4"/>
<proteinExistence type="evidence at transcript level"/>
<gene>
    <name type="primary">noc3l</name>
</gene>
<protein>
    <recommendedName>
        <fullName>Nucleolar complex protein 3 homolog</fullName>
        <shortName>NOC3 protein homolog</shortName>
    </recommendedName>
    <alternativeName>
        <fullName>NOC3-like protein</fullName>
    </alternativeName>
    <alternativeName>
        <fullName>Nucleolar complex-associated protein 3-like protein</fullName>
    </alternativeName>
</protein>
<organism>
    <name type="scientific">Xenopus laevis</name>
    <name type="common">African clawed frog</name>
    <dbReference type="NCBI Taxonomy" id="8355"/>
    <lineage>
        <taxon>Eukaryota</taxon>
        <taxon>Metazoa</taxon>
        <taxon>Chordata</taxon>
        <taxon>Craniata</taxon>
        <taxon>Vertebrata</taxon>
        <taxon>Euteleostomi</taxon>
        <taxon>Amphibia</taxon>
        <taxon>Batrachia</taxon>
        <taxon>Anura</taxon>
        <taxon>Pipoidea</taxon>
        <taxon>Pipidae</taxon>
        <taxon>Xenopodinae</taxon>
        <taxon>Xenopus</taxon>
        <taxon>Xenopus</taxon>
    </lineage>
</organism>
<feature type="chain" id="PRO_0000173478" description="Nucleolar complex protein 3 homolog">
    <location>
        <begin position="1"/>
        <end position="795"/>
    </location>
</feature>
<feature type="region of interest" description="Disordered" evidence="3">
    <location>
        <begin position="1"/>
        <end position="88"/>
    </location>
</feature>
<feature type="region of interest" description="Disordered" evidence="3">
    <location>
        <begin position="124"/>
        <end position="144"/>
    </location>
</feature>
<feature type="region of interest" description="Disordered" evidence="3">
    <location>
        <begin position="168"/>
        <end position="190"/>
    </location>
</feature>
<feature type="coiled-coil region" evidence="2">
    <location>
        <begin position="447"/>
        <end position="492"/>
    </location>
</feature>
<feature type="compositionally biased region" description="Basic and acidic residues" evidence="3">
    <location>
        <begin position="22"/>
        <end position="39"/>
    </location>
</feature>
<feature type="compositionally biased region" description="Basic and acidic residues" evidence="3">
    <location>
        <begin position="46"/>
        <end position="58"/>
    </location>
</feature>
<feature type="compositionally biased region" description="Acidic residues" evidence="3">
    <location>
        <begin position="74"/>
        <end position="88"/>
    </location>
</feature>
<feature type="compositionally biased region" description="Acidic residues" evidence="3">
    <location>
        <begin position="171"/>
        <end position="181"/>
    </location>
</feature>